<dbReference type="EMBL" id="BT043610">
    <property type="protein sequence ID" value="ACH70725.1"/>
    <property type="molecule type" value="mRNA"/>
</dbReference>
<dbReference type="RefSeq" id="NP_001135159.1">
    <property type="nucleotide sequence ID" value="NM_001141687.1"/>
</dbReference>
<dbReference type="STRING" id="8030.ENSSSAP00000043894"/>
<dbReference type="PaxDb" id="8030-ENSSSAP00000043894"/>
<dbReference type="GeneID" id="100196658"/>
<dbReference type="KEGG" id="sasa:100196658"/>
<dbReference type="CTD" id="79892"/>
<dbReference type="OrthoDB" id="135583at7898"/>
<dbReference type="Proteomes" id="UP000087266">
    <property type="component" value="Chromosome ssa18"/>
</dbReference>
<dbReference type="GO" id="GO:0005634">
    <property type="term" value="C:nucleus"/>
    <property type="evidence" value="ECO:0000250"/>
    <property type="project" value="UniProtKB"/>
</dbReference>
<dbReference type="GO" id="GO:0003682">
    <property type="term" value="F:chromatin binding"/>
    <property type="evidence" value="ECO:0000250"/>
    <property type="project" value="UniProtKB"/>
</dbReference>
<dbReference type="GO" id="GO:0051301">
    <property type="term" value="P:cell division"/>
    <property type="evidence" value="ECO:0007669"/>
    <property type="project" value="UniProtKB-KW"/>
</dbReference>
<dbReference type="GO" id="GO:0006261">
    <property type="term" value="P:DNA-templated DNA replication"/>
    <property type="evidence" value="ECO:0000250"/>
    <property type="project" value="UniProtKB"/>
</dbReference>
<dbReference type="GO" id="GO:0007062">
    <property type="term" value="P:sister chromatid cohesion"/>
    <property type="evidence" value="ECO:0000250"/>
    <property type="project" value="UniProtKB"/>
</dbReference>
<dbReference type="InterPro" id="IPR019140">
    <property type="entry name" value="MCM_complex-bd"/>
</dbReference>
<dbReference type="PANTHER" id="PTHR13489">
    <property type="entry name" value="MINI-CHROMOSOME MAINTENANCE COMPLEX-BINDING PROTEIN"/>
    <property type="match status" value="1"/>
</dbReference>
<dbReference type="PANTHER" id="PTHR13489:SF0">
    <property type="entry name" value="MINI-CHROMOSOME MAINTENANCE COMPLEX-BINDING PROTEIN"/>
    <property type="match status" value="1"/>
</dbReference>
<dbReference type="Pfam" id="PF09739">
    <property type="entry name" value="MCM_bind"/>
    <property type="match status" value="1"/>
</dbReference>
<sequence length="626" mass="70816">MPSSHDWINKPLGVVEAMFAQNNSNPEWEEKVLEYFRGQLKEKESLSWVPSLNDVPLHYLKPNSLVKFRCLVQDMFDPEFYMGVYETVDPSTKTNVLRCGKYKDVTECGVDLNSRNTVTAERQTFYCVPIPGESPWAKESYGCSSQARVVPSTSYVPSRQKRSYEEDDDDMDTQPQKQREPHTEPHGNGDSKRQETEAPSSQTTAPSDCSSHLDLNFPLPGERGPACLVKVYEGLDSFKLNDTLEIYGILSVNPVLTVLGEEKDPSSLLLNPSESMESPEEQRAHDPPASLVPRLHMLYARPLQHNNPLLPSAPTEDHSAFVSSFLVEMASVRAELLAYLTHVLLGDGLAAEYLLLHLISNVYTRRDVLPLGKFTLNLSGCPLNSYTERLYQIIQQLVPCSYRLSMSLHTMNSMRLVPKKDYVANRLVSGALQLARNTSLFLDETQLEQGQLDSSGVRNITALGNLISWQKVDYDFSYHQMEFPCNINVLVTSEGRSLLPSDCQVPLQPQVTPPNMEEYLTTIHMAQFTSQMNKFRVYLSLARTLDYSISDEVTKAVEDDFVDMRKDDPQSVTAEDLHRMLVVARLLSLSMGQTTLSRDGWMRAKHIDMLRRSRTEQQKSLNSNEP</sequence>
<reference key="1">
    <citation type="journal article" date="2010" name="BMC Genomics">
        <title>Salmo salar and Esox lucius full-length cDNA sequences reveal changes in evolutionary pressures on a post-tetraploidization genome.</title>
        <authorList>
            <person name="Leong J.S."/>
            <person name="Jantzen S.G."/>
            <person name="von Schalburg K.R."/>
            <person name="Cooper G.A."/>
            <person name="Messmer A.M."/>
            <person name="Liao N.Y."/>
            <person name="Munro S."/>
            <person name="Moore R."/>
            <person name="Holt R.A."/>
            <person name="Jones S.J."/>
            <person name="Davidson W.S."/>
            <person name="Koop B.F."/>
        </authorList>
    </citation>
    <scope>NUCLEOTIDE SEQUENCE [LARGE SCALE MRNA]</scope>
    <source>
        <tissue>White muscle</tissue>
    </source>
</reference>
<keyword id="KW-0131">Cell cycle</keyword>
<keyword id="KW-0132">Cell division</keyword>
<keyword id="KW-0235">DNA replication</keyword>
<keyword id="KW-0498">Mitosis</keyword>
<keyword id="KW-0539">Nucleus</keyword>
<keyword id="KW-1185">Reference proteome</keyword>
<name>MCMBP_SALSA</name>
<protein>
    <recommendedName>
        <fullName>Mini-chromosome maintenance complex-binding protein</fullName>
        <shortName>MCM-BP</shortName>
        <shortName>MCM-binding protein</shortName>
    </recommendedName>
</protein>
<organism>
    <name type="scientific">Salmo salar</name>
    <name type="common">Atlantic salmon</name>
    <dbReference type="NCBI Taxonomy" id="8030"/>
    <lineage>
        <taxon>Eukaryota</taxon>
        <taxon>Metazoa</taxon>
        <taxon>Chordata</taxon>
        <taxon>Craniata</taxon>
        <taxon>Vertebrata</taxon>
        <taxon>Euteleostomi</taxon>
        <taxon>Actinopterygii</taxon>
        <taxon>Neopterygii</taxon>
        <taxon>Teleostei</taxon>
        <taxon>Protacanthopterygii</taxon>
        <taxon>Salmoniformes</taxon>
        <taxon>Salmonidae</taxon>
        <taxon>Salmoninae</taxon>
        <taxon>Salmo</taxon>
    </lineage>
</organism>
<accession>B5DG51</accession>
<evidence type="ECO:0000250" key="1"/>
<evidence type="ECO:0000256" key="2">
    <source>
        <dbReference type="SAM" id="MobiDB-lite"/>
    </source>
</evidence>
<evidence type="ECO:0000305" key="3"/>
<comment type="function">
    <text evidence="1">Associated component of the mcm complex that acts as a regulator of DNA replication. Binds to the MCM complex during late S phase and promotes the disassembly of the mcm complex from chromatin, thereby acting as a key regulator of pre-replication complex (pre-RC) unloading from replicated DNA. Can dissociate the mcm complex without addition of ATP; probably acts by destabilizing interactions of each individual subunits of the mcm complex. Required for sister chromatid cohesion (By similarity).</text>
</comment>
<comment type="subunit">
    <text evidence="1">Interacts with the mcm complex: associates with the mcm3-7 complex which lacks mcm2, while it does not interact with the mcm complex when mcm2 is present (mcm2-7 complex).</text>
</comment>
<comment type="subcellular location">
    <subcellularLocation>
        <location evidence="1">Nucleus</location>
    </subcellularLocation>
    <text evidence="1">Associates with chromatin.</text>
</comment>
<comment type="similarity">
    <text evidence="3">Belongs to the MCMBP family.</text>
</comment>
<gene>
    <name type="primary">mcmbp</name>
</gene>
<feature type="chain" id="PRO_0000405810" description="Mini-chromosome maintenance complex-binding protein">
    <location>
        <begin position="1"/>
        <end position="626"/>
    </location>
</feature>
<feature type="region of interest" description="Disordered" evidence="2">
    <location>
        <begin position="152"/>
        <end position="216"/>
    </location>
</feature>
<feature type="region of interest" description="Disordered" evidence="2">
    <location>
        <begin position="265"/>
        <end position="287"/>
    </location>
</feature>
<feature type="compositionally biased region" description="Basic and acidic residues" evidence="2">
    <location>
        <begin position="177"/>
        <end position="196"/>
    </location>
</feature>
<feature type="compositionally biased region" description="Polar residues" evidence="2">
    <location>
        <begin position="197"/>
        <end position="210"/>
    </location>
</feature>
<proteinExistence type="evidence at transcript level"/>